<reference key="1">
    <citation type="submission" date="2008-03" db="EMBL/GenBank/DDBJ databases">
        <title>Complete sequence of Thermoproteus neutrophilus V24Sta.</title>
        <authorList>
            <consortium name="US DOE Joint Genome Institute"/>
            <person name="Copeland A."/>
            <person name="Lucas S."/>
            <person name="Lapidus A."/>
            <person name="Glavina del Rio T."/>
            <person name="Dalin E."/>
            <person name="Tice H."/>
            <person name="Bruce D."/>
            <person name="Goodwin L."/>
            <person name="Pitluck S."/>
            <person name="Sims D."/>
            <person name="Brettin T."/>
            <person name="Detter J.C."/>
            <person name="Han C."/>
            <person name="Kuske C.R."/>
            <person name="Schmutz J."/>
            <person name="Larimer F."/>
            <person name="Land M."/>
            <person name="Hauser L."/>
            <person name="Kyrpides N."/>
            <person name="Mikhailova N."/>
            <person name="Biddle J.F."/>
            <person name="Zhang Z."/>
            <person name="Fitz-Gibbon S.T."/>
            <person name="Lowe T.M."/>
            <person name="Saltikov C."/>
            <person name="House C.H."/>
            <person name="Richardson P."/>
        </authorList>
    </citation>
    <scope>NUCLEOTIDE SEQUENCE [LARGE SCALE GENOMIC DNA]</scope>
    <source>
        <strain>DSM 2338 / JCM 9278 / NBRC 100436 / V24Sta</strain>
    </source>
</reference>
<evidence type="ECO:0000255" key="1">
    <source>
        <dbReference type="HAMAP-Rule" id="MF_00464"/>
    </source>
</evidence>
<name>SPEH_PYRNV</name>
<dbReference type="EC" id="4.1.1.50" evidence="1"/>
<dbReference type="EMBL" id="CP001014">
    <property type="protein sequence ID" value="ACB39550.1"/>
    <property type="molecule type" value="Genomic_DNA"/>
</dbReference>
<dbReference type="RefSeq" id="WP_012349970.1">
    <property type="nucleotide sequence ID" value="NC_010525.1"/>
</dbReference>
<dbReference type="SMR" id="B1YCN7"/>
<dbReference type="STRING" id="444157.Tneu_0611"/>
<dbReference type="GeneID" id="6165434"/>
<dbReference type="KEGG" id="tne:Tneu_0611"/>
<dbReference type="eggNOG" id="arCOG00279">
    <property type="taxonomic scope" value="Archaea"/>
</dbReference>
<dbReference type="HOGENOM" id="CLU_125470_2_1_2"/>
<dbReference type="OrthoDB" id="114016at2157"/>
<dbReference type="UniPathway" id="UPA00331">
    <property type="reaction ID" value="UER00451"/>
</dbReference>
<dbReference type="Proteomes" id="UP000001694">
    <property type="component" value="Chromosome"/>
</dbReference>
<dbReference type="GO" id="GO:0005829">
    <property type="term" value="C:cytosol"/>
    <property type="evidence" value="ECO:0007669"/>
    <property type="project" value="TreeGrafter"/>
</dbReference>
<dbReference type="GO" id="GO:0004014">
    <property type="term" value="F:adenosylmethionine decarboxylase activity"/>
    <property type="evidence" value="ECO:0007669"/>
    <property type="project" value="UniProtKB-UniRule"/>
</dbReference>
<dbReference type="GO" id="GO:0008295">
    <property type="term" value="P:spermidine biosynthetic process"/>
    <property type="evidence" value="ECO:0007669"/>
    <property type="project" value="UniProtKB-UniRule"/>
</dbReference>
<dbReference type="Gene3D" id="3.30.160.750">
    <property type="match status" value="1"/>
</dbReference>
<dbReference type="Gene3D" id="3.30.360.110">
    <property type="entry name" value="S-adenosylmethionine decarboxylase domain"/>
    <property type="match status" value="1"/>
</dbReference>
<dbReference type="HAMAP" id="MF_00464">
    <property type="entry name" value="AdoMetDC_1"/>
    <property type="match status" value="1"/>
</dbReference>
<dbReference type="InterPro" id="IPR042286">
    <property type="entry name" value="AdoMetDC_C"/>
</dbReference>
<dbReference type="InterPro" id="IPR003826">
    <property type="entry name" value="AdoMetDC_fam_prok"/>
</dbReference>
<dbReference type="InterPro" id="IPR042284">
    <property type="entry name" value="AdoMetDC_N"/>
</dbReference>
<dbReference type="InterPro" id="IPR016067">
    <property type="entry name" value="S-AdoMet_deCO2ase_core"/>
</dbReference>
<dbReference type="InterPro" id="IPR017716">
    <property type="entry name" value="S-AdoMet_deCOase_pro-enz"/>
</dbReference>
<dbReference type="NCBIfam" id="TIGR03330">
    <property type="entry name" value="SAM_DCase_Bsu"/>
    <property type="match status" value="1"/>
</dbReference>
<dbReference type="PANTHER" id="PTHR33866">
    <property type="entry name" value="S-ADENOSYLMETHIONINE DECARBOXYLASE PROENZYME"/>
    <property type="match status" value="1"/>
</dbReference>
<dbReference type="PANTHER" id="PTHR33866:SF2">
    <property type="entry name" value="S-ADENOSYLMETHIONINE DECARBOXYLASE PROENZYME"/>
    <property type="match status" value="1"/>
</dbReference>
<dbReference type="Pfam" id="PF02675">
    <property type="entry name" value="AdoMet_dc"/>
    <property type="match status" value="1"/>
</dbReference>
<dbReference type="SUPFAM" id="SSF56276">
    <property type="entry name" value="S-adenosylmethionine decarboxylase"/>
    <property type="match status" value="1"/>
</dbReference>
<feature type="chain" id="PRO_1000125465" description="S-adenosylmethionine decarboxylase beta chain" evidence="1">
    <location>
        <begin position="1"/>
        <end position="69"/>
    </location>
</feature>
<feature type="chain" id="PRO_1000125466" description="S-adenosylmethionine decarboxylase alpha chain" evidence="1">
    <location>
        <begin position="70"/>
        <end position="124"/>
    </location>
</feature>
<feature type="active site" description="Schiff-base intermediate with substrate; via pyruvic acid" evidence="1">
    <location>
        <position position="70"/>
    </location>
</feature>
<feature type="active site" description="Proton acceptor; for processing activity" evidence="1">
    <location>
        <position position="75"/>
    </location>
</feature>
<feature type="active site" description="Proton donor; for catalytic activity" evidence="1">
    <location>
        <position position="90"/>
    </location>
</feature>
<feature type="site" description="Cleavage (non-hydrolytic); by autolysis" evidence="1">
    <location>
        <begin position="69"/>
        <end position="70"/>
    </location>
</feature>
<feature type="modified residue" description="Pyruvic acid (Ser); by autocatalysis" evidence="1">
    <location>
        <position position="70"/>
    </location>
</feature>
<gene>
    <name evidence="1" type="primary">speH</name>
    <name type="ordered locus">Tneu_0611</name>
</gene>
<comment type="function">
    <text evidence="1">Catalyzes the decarboxylation of S-adenosylmethionine to S-adenosylmethioninamine (dcAdoMet), the propylamine donor required for the synthesis of the polyamines spermine and spermidine from the diamine putrescine.</text>
</comment>
<comment type="catalytic activity">
    <reaction evidence="1">
        <text>S-adenosyl-L-methionine + H(+) = S-adenosyl 3-(methylsulfanyl)propylamine + CO2</text>
        <dbReference type="Rhea" id="RHEA:15981"/>
        <dbReference type="ChEBI" id="CHEBI:15378"/>
        <dbReference type="ChEBI" id="CHEBI:16526"/>
        <dbReference type="ChEBI" id="CHEBI:57443"/>
        <dbReference type="ChEBI" id="CHEBI:59789"/>
        <dbReference type="EC" id="4.1.1.50"/>
    </reaction>
</comment>
<comment type="cofactor">
    <cofactor evidence="1">
        <name>pyruvate</name>
        <dbReference type="ChEBI" id="CHEBI:15361"/>
    </cofactor>
    <text evidence="1">Binds 1 pyruvoyl group covalently per subunit.</text>
</comment>
<comment type="pathway">
    <text evidence="1">Amine and polyamine biosynthesis; S-adenosylmethioninamine biosynthesis; S-adenosylmethioninamine from S-adenosyl-L-methionine: step 1/1.</text>
</comment>
<comment type="subunit">
    <text evidence="1">Heterotetramer of two alpha and two beta chains arranged as a dimer of alpha/beta heterodimers.</text>
</comment>
<comment type="PTM">
    <text evidence="1">Is synthesized initially as an inactive proenzyme. Formation of the active enzyme involves a self-maturation process in which the active site pyruvoyl group is generated from an internal serine residue via an autocatalytic post-translational modification. Two non-identical subunits are generated from the proenzyme in this reaction, and the pyruvate is formed at the N-terminus of the alpha chain, which is derived from the carboxyl end of the proenzyme. The post-translation cleavage follows an unusual pathway, termed non-hydrolytic serinolysis, in which the side chain hydroxyl group of the serine supplies its oxygen atom to form the C-terminus of the beta chain, while the remainder of the serine residue undergoes an oxidative deamination to produce ammonia and the pyruvoyl group blocking the N-terminus of the alpha chain.</text>
</comment>
<comment type="similarity">
    <text evidence="1">Belongs to the prokaryotic AdoMetDC family. Type 1 subfamily.</text>
</comment>
<protein>
    <recommendedName>
        <fullName evidence="1">S-adenosylmethionine decarboxylase proenzyme</fullName>
        <shortName evidence="1">AdoMetDC</shortName>
        <shortName evidence="1">SAMDC</shortName>
        <ecNumber evidence="1">4.1.1.50</ecNumber>
    </recommendedName>
    <component>
        <recommendedName>
            <fullName evidence="1">S-adenosylmethionine decarboxylase beta chain</fullName>
        </recommendedName>
    </component>
    <component>
        <recommendedName>
            <fullName evidence="1">S-adenosylmethionine decarboxylase alpha chain</fullName>
        </recommendedName>
    </component>
</protein>
<keyword id="KW-0068">Autocatalytic cleavage</keyword>
<keyword id="KW-0210">Decarboxylase</keyword>
<keyword id="KW-0456">Lyase</keyword>
<keyword id="KW-0620">Polyamine biosynthesis</keyword>
<keyword id="KW-0670">Pyruvate</keyword>
<keyword id="KW-0949">S-adenosyl-L-methionine</keyword>
<keyword id="KW-0704">Schiff base</keyword>
<keyword id="KW-0745">Spermidine biosynthesis</keyword>
<keyword id="KW-0865">Zymogen</keyword>
<sequence length="124" mass="13503">MAGGVGAQIVGRHIYGNLYGCEQQILKDEAALITIVKEAAKVANAILLSIGSYRFGPEGGLTVFAVVAESHISIHTWPEHGFATVDVYTCGDHTDPKAAFDYIVSKLKPRKVEAFFGDRSMYRE</sequence>
<accession>B1YCN7</accession>
<organism>
    <name type="scientific">Pyrobaculum neutrophilum (strain DSM 2338 / JCM 9278 / NBRC 100436 / V24Sta)</name>
    <name type="common">Thermoproteus neutrophilus</name>
    <dbReference type="NCBI Taxonomy" id="444157"/>
    <lineage>
        <taxon>Archaea</taxon>
        <taxon>Thermoproteota</taxon>
        <taxon>Thermoprotei</taxon>
        <taxon>Thermoproteales</taxon>
        <taxon>Thermoproteaceae</taxon>
        <taxon>Pyrobaculum</taxon>
    </lineage>
</organism>
<proteinExistence type="inferred from homology"/>